<organism>
    <name type="scientific">Mus musculus</name>
    <name type="common">Mouse</name>
    <dbReference type="NCBI Taxonomy" id="10090"/>
    <lineage>
        <taxon>Eukaryota</taxon>
        <taxon>Metazoa</taxon>
        <taxon>Chordata</taxon>
        <taxon>Craniata</taxon>
        <taxon>Vertebrata</taxon>
        <taxon>Euteleostomi</taxon>
        <taxon>Mammalia</taxon>
        <taxon>Eutheria</taxon>
        <taxon>Euarchontoglires</taxon>
        <taxon>Glires</taxon>
        <taxon>Rodentia</taxon>
        <taxon>Myomorpha</taxon>
        <taxon>Muroidea</taxon>
        <taxon>Muridae</taxon>
        <taxon>Murinae</taxon>
        <taxon>Mus</taxon>
        <taxon>Mus</taxon>
    </lineage>
</organism>
<keyword id="KW-0002">3D-structure</keyword>
<keyword id="KW-0025">Alternative splicing</keyword>
<keyword id="KW-0963">Cytoplasm</keyword>
<keyword id="KW-0967">Endosome</keyword>
<keyword id="KW-0472">Membrane</keyword>
<keyword id="KW-0597">Phosphoprotein</keyword>
<keyword id="KW-0653">Protein transport</keyword>
<keyword id="KW-1185">Reference proteome</keyword>
<keyword id="KW-0728">SH3 domain</keyword>
<keyword id="KW-0813">Transport</keyword>
<gene>
    <name type="primary">Stam2</name>
    <name type="synonym">Hbp</name>
</gene>
<reference key="1">
    <citation type="journal article" date="2000" name="Genes Cells">
        <title>A hrs binding protein having a Src homology 3 domain is involved in intracellular degradation of growth factors and their receptors.</title>
        <authorList>
            <person name="Takata H."/>
            <person name="Kato M."/>
            <person name="Denda K."/>
            <person name="Kitamura N."/>
        </authorList>
    </citation>
    <scope>NUCLEOTIDE SEQUENCE [MRNA] (ISOFORM 1)</scope>
    <scope>TISSUE SPECIFICITY</scope>
    <scope>INTERACTION WITH HGS</scope>
    <scope>DOMAIN</scope>
    <scope>SUBCELLULAR LOCATION</scope>
    <source>
        <tissue>Liver</tissue>
    </source>
</reference>
<reference key="2">
    <citation type="journal article" date="2005" name="Science">
        <title>The transcriptional landscape of the mammalian genome.</title>
        <authorList>
            <person name="Carninci P."/>
            <person name="Kasukawa T."/>
            <person name="Katayama S."/>
            <person name="Gough J."/>
            <person name="Frith M.C."/>
            <person name="Maeda N."/>
            <person name="Oyama R."/>
            <person name="Ravasi T."/>
            <person name="Lenhard B."/>
            <person name="Wells C."/>
            <person name="Kodzius R."/>
            <person name="Shimokawa K."/>
            <person name="Bajic V.B."/>
            <person name="Brenner S.E."/>
            <person name="Batalov S."/>
            <person name="Forrest A.R."/>
            <person name="Zavolan M."/>
            <person name="Davis M.J."/>
            <person name="Wilming L.G."/>
            <person name="Aidinis V."/>
            <person name="Allen J.E."/>
            <person name="Ambesi-Impiombato A."/>
            <person name="Apweiler R."/>
            <person name="Aturaliya R.N."/>
            <person name="Bailey T.L."/>
            <person name="Bansal M."/>
            <person name="Baxter L."/>
            <person name="Beisel K.W."/>
            <person name="Bersano T."/>
            <person name="Bono H."/>
            <person name="Chalk A.M."/>
            <person name="Chiu K.P."/>
            <person name="Choudhary V."/>
            <person name="Christoffels A."/>
            <person name="Clutterbuck D.R."/>
            <person name="Crowe M.L."/>
            <person name="Dalla E."/>
            <person name="Dalrymple B.P."/>
            <person name="de Bono B."/>
            <person name="Della Gatta G."/>
            <person name="di Bernardo D."/>
            <person name="Down T."/>
            <person name="Engstrom P."/>
            <person name="Fagiolini M."/>
            <person name="Faulkner G."/>
            <person name="Fletcher C.F."/>
            <person name="Fukushima T."/>
            <person name="Furuno M."/>
            <person name="Futaki S."/>
            <person name="Gariboldi M."/>
            <person name="Georgii-Hemming P."/>
            <person name="Gingeras T.R."/>
            <person name="Gojobori T."/>
            <person name="Green R.E."/>
            <person name="Gustincich S."/>
            <person name="Harbers M."/>
            <person name="Hayashi Y."/>
            <person name="Hensch T.K."/>
            <person name="Hirokawa N."/>
            <person name="Hill D."/>
            <person name="Huminiecki L."/>
            <person name="Iacono M."/>
            <person name="Ikeo K."/>
            <person name="Iwama A."/>
            <person name="Ishikawa T."/>
            <person name="Jakt M."/>
            <person name="Kanapin A."/>
            <person name="Katoh M."/>
            <person name="Kawasawa Y."/>
            <person name="Kelso J."/>
            <person name="Kitamura H."/>
            <person name="Kitano H."/>
            <person name="Kollias G."/>
            <person name="Krishnan S.P."/>
            <person name="Kruger A."/>
            <person name="Kummerfeld S.K."/>
            <person name="Kurochkin I.V."/>
            <person name="Lareau L.F."/>
            <person name="Lazarevic D."/>
            <person name="Lipovich L."/>
            <person name="Liu J."/>
            <person name="Liuni S."/>
            <person name="McWilliam S."/>
            <person name="Madan Babu M."/>
            <person name="Madera M."/>
            <person name="Marchionni L."/>
            <person name="Matsuda H."/>
            <person name="Matsuzawa S."/>
            <person name="Miki H."/>
            <person name="Mignone F."/>
            <person name="Miyake S."/>
            <person name="Morris K."/>
            <person name="Mottagui-Tabar S."/>
            <person name="Mulder N."/>
            <person name="Nakano N."/>
            <person name="Nakauchi H."/>
            <person name="Ng P."/>
            <person name="Nilsson R."/>
            <person name="Nishiguchi S."/>
            <person name="Nishikawa S."/>
            <person name="Nori F."/>
            <person name="Ohara O."/>
            <person name="Okazaki Y."/>
            <person name="Orlando V."/>
            <person name="Pang K.C."/>
            <person name="Pavan W.J."/>
            <person name="Pavesi G."/>
            <person name="Pesole G."/>
            <person name="Petrovsky N."/>
            <person name="Piazza S."/>
            <person name="Reed J."/>
            <person name="Reid J.F."/>
            <person name="Ring B.Z."/>
            <person name="Ringwald M."/>
            <person name="Rost B."/>
            <person name="Ruan Y."/>
            <person name="Salzberg S.L."/>
            <person name="Sandelin A."/>
            <person name="Schneider C."/>
            <person name="Schoenbach C."/>
            <person name="Sekiguchi K."/>
            <person name="Semple C.A."/>
            <person name="Seno S."/>
            <person name="Sessa L."/>
            <person name="Sheng Y."/>
            <person name="Shibata Y."/>
            <person name="Shimada H."/>
            <person name="Shimada K."/>
            <person name="Silva D."/>
            <person name="Sinclair B."/>
            <person name="Sperling S."/>
            <person name="Stupka E."/>
            <person name="Sugiura K."/>
            <person name="Sultana R."/>
            <person name="Takenaka Y."/>
            <person name="Taki K."/>
            <person name="Tammoja K."/>
            <person name="Tan S.L."/>
            <person name="Tang S."/>
            <person name="Taylor M.S."/>
            <person name="Tegner J."/>
            <person name="Teichmann S.A."/>
            <person name="Ueda H.R."/>
            <person name="van Nimwegen E."/>
            <person name="Verardo R."/>
            <person name="Wei C.L."/>
            <person name="Yagi K."/>
            <person name="Yamanishi H."/>
            <person name="Zabarovsky E."/>
            <person name="Zhu S."/>
            <person name="Zimmer A."/>
            <person name="Hide W."/>
            <person name="Bult C."/>
            <person name="Grimmond S.M."/>
            <person name="Teasdale R.D."/>
            <person name="Liu E.T."/>
            <person name="Brusic V."/>
            <person name="Quackenbush J."/>
            <person name="Wahlestedt C."/>
            <person name="Mattick J.S."/>
            <person name="Hume D.A."/>
            <person name="Kai C."/>
            <person name="Sasaki D."/>
            <person name="Tomaru Y."/>
            <person name="Fukuda S."/>
            <person name="Kanamori-Katayama M."/>
            <person name="Suzuki M."/>
            <person name="Aoki J."/>
            <person name="Arakawa T."/>
            <person name="Iida J."/>
            <person name="Imamura K."/>
            <person name="Itoh M."/>
            <person name="Kato T."/>
            <person name="Kawaji H."/>
            <person name="Kawagashira N."/>
            <person name="Kawashima T."/>
            <person name="Kojima M."/>
            <person name="Kondo S."/>
            <person name="Konno H."/>
            <person name="Nakano K."/>
            <person name="Ninomiya N."/>
            <person name="Nishio T."/>
            <person name="Okada M."/>
            <person name="Plessy C."/>
            <person name="Shibata K."/>
            <person name="Shiraki T."/>
            <person name="Suzuki S."/>
            <person name="Tagami M."/>
            <person name="Waki K."/>
            <person name="Watahiki A."/>
            <person name="Okamura-Oho Y."/>
            <person name="Suzuki H."/>
            <person name="Kawai J."/>
            <person name="Hayashizaki Y."/>
        </authorList>
    </citation>
    <scope>NUCLEOTIDE SEQUENCE [LARGE SCALE MRNA] (ISOFORMS 1 AND 2)</scope>
    <source>
        <strain>C57BL/6J</strain>
        <tissue>Lung</tissue>
    </source>
</reference>
<reference key="3">
    <citation type="journal article" date="2009" name="PLoS Biol.">
        <title>Lineage-specific biology revealed by a finished genome assembly of the mouse.</title>
        <authorList>
            <person name="Church D.M."/>
            <person name="Goodstadt L."/>
            <person name="Hillier L.W."/>
            <person name="Zody M.C."/>
            <person name="Goldstein S."/>
            <person name="She X."/>
            <person name="Bult C.J."/>
            <person name="Agarwala R."/>
            <person name="Cherry J.L."/>
            <person name="DiCuccio M."/>
            <person name="Hlavina W."/>
            <person name="Kapustin Y."/>
            <person name="Meric P."/>
            <person name="Maglott D."/>
            <person name="Birtle Z."/>
            <person name="Marques A.C."/>
            <person name="Graves T."/>
            <person name="Zhou S."/>
            <person name="Teague B."/>
            <person name="Potamousis K."/>
            <person name="Churas C."/>
            <person name="Place M."/>
            <person name="Herschleb J."/>
            <person name="Runnheim R."/>
            <person name="Forrest D."/>
            <person name="Amos-Landgraf J."/>
            <person name="Schwartz D.C."/>
            <person name="Cheng Z."/>
            <person name="Lindblad-Toh K."/>
            <person name="Eichler E.E."/>
            <person name="Ponting C.P."/>
        </authorList>
    </citation>
    <scope>NUCLEOTIDE SEQUENCE [LARGE SCALE GENOMIC DNA]</scope>
    <source>
        <strain>C57BL/6J</strain>
    </source>
</reference>
<reference key="4">
    <citation type="journal article" date="2004" name="Genome Res.">
        <title>The status, quality, and expansion of the NIH full-length cDNA project: the Mammalian Gene Collection (MGC).</title>
        <authorList>
            <consortium name="The MGC Project Team"/>
        </authorList>
    </citation>
    <scope>NUCLEOTIDE SEQUENCE [LARGE SCALE MRNA] (ISOFORM 1)</scope>
    <source>
        <strain>FVB/N</strain>
        <tissue>Mammary tumor</tissue>
    </source>
</reference>
<reference key="5">
    <citation type="journal article" date="2000" name="J. Biol. Chem.">
        <title>A deubiquitinating enzyme UBPY interacts with the Src homology 3 domain of Hrs-binding protein via a novel binding motif PX(V/I)(D/N)RXXKP.</title>
        <authorList>
            <person name="Kato M."/>
            <person name="Miyazawa K."/>
            <person name="Kitamura N."/>
        </authorList>
    </citation>
    <scope>INTERACTION WITH USP8</scope>
</reference>
<reference key="6">
    <citation type="journal article" date="2002" name="Mol. Cell. Biol.">
        <title>Signal-transducing adaptor molecules STAM1 and STAM2 are required for T-cell development and survival.</title>
        <authorList>
            <person name="Yamada M."/>
            <person name="Ishii N."/>
            <person name="Asao H."/>
            <person name="Murata K."/>
            <person name="Kanazawa C."/>
            <person name="Sasaki H."/>
            <person name="Sugamura K."/>
        </authorList>
    </citation>
    <scope>DISRUPTION PHENOTYPE</scope>
</reference>
<reference key="7">
    <citation type="journal article" date="2003" name="J. Biol. Chem.">
        <title>STAM and Hrs are subunits of a multivalent ubiquitin-binding complex on early endosomes.</title>
        <authorList>
            <person name="Bache K.G."/>
            <person name="Raiborg C."/>
            <person name="Mehlum A."/>
            <person name="Stenmark H."/>
        </authorList>
    </citation>
    <scope>INTERACTION WITH HGS; EPS15 AND UBIQUITIN</scope>
    <scope>SUBCELLULAR LOCATION</scope>
</reference>
<reference key="8">
    <citation type="journal article" date="2003" name="Mol. Biol. Cell">
        <title>STAM proteins bind ubiquitinated proteins on the early endosome via the VHS domain and ubiquitin-interacting motif.</title>
        <authorList>
            <person name="Mizuno E."/>
            <person name="Kawahata K."/>
            <person name="Kato M."/>
            <person name="Kitamura N."/>
            <person name="Komada M."/>
        </authorList>
    </citation>
    <scope>INTERACTION WITH UBIQUITIN</scope>
    <scope>FUNCTION</scope>
</reference>
<reference key="9">
    <citation type="journal article" date="2005" name="J. Cell Sci.">
        <title>Ubiquilin recruits Eps15 into ubiquitin-rich cytoplasmic aggregates via a UIM-UBL interaction.</title>
        <authorList>
            <person name="Regan-Klapisz E."/>
            <person name="Sorokina I."/>
            <person name="Voortman J."/>
            <person name="de Keizer P."/>
            <person name="Roovers R.C."/>
            <person name="Verheesen P."/>
            <person name="Urbe S."/>
            <person name="Fallon L."/>
            <person name="Fon E.A."/>
            <person name="Verkleij A."/>
            <person name="Benmerah A."/>
            <person name="van Bergen en Henegouwen P.M."/>
        </authorList>
    </citation>
    <scope>INTERACTION WITH UBQLN1</scope>
    <scope>MUTAGENESIS OF LEU-176 AND SER-177</scope>
</reference>
<reference key="10">
    <citation type="journal article" date="2010" name="Cell">
        <title>A tissue-specific atlas of mouse protein phosphorylation and expression.</title>
        <authorList>
            <person name="Huttlin E.L."/>
            <person name="Jedrychowski M.P."/>
            <person name="Elias J.E."/>
            <person name="Goswami T."/>
            <person name="Rad R."/>
            <person name="Beausoleil S.A."/>
            <person name="Villen J."/>
            <person name="Haas W."/>
            <person name="Sowa M.E."/>
            <person name="Gygi S.P."/>
        </authorList>
    </citation>
    <scope>IDENTIFICATION BY MASS SPECTROMETRY [LARGE SCALE ANALYSIS]</scope>
    <source>
        <tissue>Lung</tissue>
        <tissue>Spleen</tissue>
        <tissue>Testis</tissue>
    </source>
</reference>
<reference key="11">
    <citation type="journal article" date="2003" name="J. Biol. Chem.">
        <title>Structural insight into modest binding of a non-PXXP ligand to the signal transducing adaptor molecule-2 Src homology 3 domain.</title>
        <authorList>
            <person name="Kaneko T."/>
            <person name="Kumasaka T."/>
            <person name="Ganbe T."/>
            <person name="Sato T."/>
            <person name="Miyazawa K."/>
            <person name="Kitamura N."/>
            <person name="Tanaka N."/>
        </authorList>
    </citation>
    <scope>X-RAY CRYSTALLOGRAPHY (1.7 ANGSTROMS) OF 203-260 IN COMPLEX WITH USP8</scope>
</reference>
<comment type="function">
    <text evidence="1 10">Involved in intracellular signal transduction mediated by cytokines and growth factors. Upon IL-2 and GM-CSL stimulation, it plays a role in signaling leading to DNA synthesis and MYC induction. May also play a role in T-cell development. Involved in down-regulation of receptor tyrosine kinase via multivesicular body (MVBs) when complexed with HGS (ESCRT-0 complex). The ESCRT-0 complex binds ubiquitin and acts as a sorting machinery that recognizes ubiquitinated receptors and transfers them to further sequential lysosomal sorting/trafficking processes (By similarity).</text>
</comment>
<comment type="subunit">
    <text evidence="2 11">Component of the ESCRT-0 complex composed of STAM or STAM2 and HGS. Part of a complex at least composed of HSG, STAM2 and EPS15. Interacts with JAK2 and JAK3. Interacts with ubiquitinated proteins and the deubiquitinating enzyme USP8/UBPY. Interacts (via the via the PxVxL motif) with CBX5; the interaction is direct. Interacts with VPS37C. Interacts with ubiquitin; the interaction is direct (By similarity). Interacts (via UIM domain) with UBQLN1 (via ubiquitin-like domain).</text>
</comment>
<comment type="subcellular location">
    <subcellularLocation>
        <location evidence="6 9">Cytoplasm</location>
    </subcellularLocation>
    <subcellularLocation>
        <location evidence="1">Early endosome membrane</location>
        <topology evidence="1">Peripheral membrane protein</topology>
        <orientation evidence="1">Cytoplasmic side</orientation>
    </subcellularLocation>
</comment>
<comment type="alternative products">
    <event type="alternative splicing"/>
    <isoform>
        <id>O88811-1</id>
        <name>1</name>
        <sequence type="displayed"/>
    </isoform>
    <isoform>
        <id>O88811-2</id>
        <name>2</name>
        <sequence type="described" ref="VSP_014849 VSP_014850 VSP_014851"/>
    </isoform>
</comment>
<comment type="tissue specificity">
    <text evidence="6">Ubiquitously expressed, with highest levels in testis.</text>
</comment>
<comment type="domain">
    <text evidence="6">The VHS and UIM domains mediate the interaction with ubiquitinated proteins.</text>
</comment>
<comment type="domain">
    <text evidence="6">The SH3 domain mediates the interaction with USP8.</text>
</comment>
<comment type="domain">
    <text evidence="6">Contains one Pro-Xaa-Val-Xaa-Leu (PxVxL) motif, which is required for interaction with chromoshadow domains. This motif requires additional residues -7, -6, +4 and +5 of the central Val which contact the chromoshadow domain.</text>
</comment>
<comment type="PTM">
    <text evidence="1">Phosphorylated in response to IL-2, GM-CSF, EGF and PDGF.</text>
</comment>
<comment type="disruption phenotype">
    <text evidence="8">Adult mice lacking Stam and Stam2 due to inducible gene targeting exhibit significant reduction in T-cell development in the thymus and profound reduction in the peripheral mature T-cells.</text>
</comment>
<comment type="similarity">
    <text evidence="13">Belongs to the STAM family.</text>
</comment>
<sequence length="523" mass="57455">MPLFTANPFEQDVEKATNEYNTTEDWSLIMDICDRVGSTPSGAKDCLKAIMKRVNHKVPHVALQALTLLGACVANCGKIFHLEVCSRDFATEVRSVIKNKAHPKVCEKLKSLMVEWSEEFQKDPQFSLISATIKSMKEEGVTFPSAGSQTVAAAAKNGTSLNKNKEDEDIAKAIELSLQEQKQQYTETKALYPPAESQLNNKAARRVRALYDFEAVEDNELTFKHGELITVLDDSDANWWQGENHRGTGLFPSNFVTTDLSTEVETATVDKLNVIDDDVEEIKKSEPEPVYIDEGKMDRALQILQSIDPKESKPDSQDLLDLEDVCQQMGPMIDEKLEEIDRKHSELSELNVKVLEALDLYNKLVNEAPVYSVYSKLHPAHYPPAAAGVPVQTYPVQSHGGNYLGHGIHQVSVAQNYNLGPDPMGSLRSLPPNMNSVTAHTVQPPYLSTGQDTVSNPSYMNQSSRLQAAAGTAAYTQPVGMSTDVSSFQNTASGLPQLAGFPVAVPAPVAAQPQASYHQQPLL</sequence>
<proteinExistence type="evidence at protein level"/>
<dbReference type="EMBL" id="AB012611">
    <property type="protein sequence ID" value="BAA33547.1"/>
    <property type="molecule type" value="mRNA"/>
</dbReference>
<dbReference type="EMBL" id="AK004604">
    <property type="protein sequence ID" value="BAB23403.1"/>
    <property type="molecule type" value="mRNA"/>
</dbReference>
<dbReference type="EMBL" id="AK044230">
    <property type="protein sequence ID" value="BAC31830.1"/>
    <property type="molecule type" value="mRNA"/>
</dbReference>
<dbReference type="EMBL" id="AL928960">
    <property type="status" value="NOT_ANNOTATED_CDS"/>
    <property type="molecule type" value="Genomic_DNA"/>
</dbReference>
<dbReference type="EMBL" id="BC013818">
    <property type="protein sequence ID" value="AAH13818.1"/>
    <property type="molecule type" value="mRNA"/>
</dbReference>
<dbReference type="CCDS" id="CCDS16037.1">
    <molecule id="O88811-1"/>
</dbReference>
<dbReference type="RefSeq" id="NP_062641.1">
    <molecule id="O88811-1"/>
    <property type="nucleotide sequence ID" value="NM_019667.3"/>
</dbReference>
<dbReference type="PDB" id="1UJ0">
    <property type="method" value="X-ray"/>
    <property type="resolution" value="1.70 A"/>
    <property type="chains" value="A=204-261"/>
</dbReference>
<dbReference type="PDBsum" id="1UJ0"/>
<dbReference type="SMR" id="O88811"/>
<dbReference type="BioGRID" id="207904">
    <property type="interactions" value="18"/>
</dbReference>
<dbReference type="FunCoup" id="O88811">
    <property type="interactions" value="5280"/>
</dbReference>
<dbReference type="IntAct" id="O88811">
    <property type="interactions" value="5"/>
</dbReference>
<dbReference type="MINT" id="O88811"/>
<dbReference type="STRING" id="10090.ENSMUSP00000099820"/>
<dbReference type="GlyGen" id="O88811">
    <property type="glycosylation" value="4 sites, 1 N-linked glycan (1 site), 1 O-linked glycan (2 sites)"/>
</dbReference>
<dbReference type="iPTMnet" id="O88811"/>
<dbReference type="PhosphoSitePlus" id="O88811"/>
<dbReference type="SwissPalm" id="O88811"/>
<dbReference type="jPOST" id="O88811"/>
<dbReference type="PaxDb" id="10090-ENSMUSP00000099820"/>
<dbReference type="PeptideAtlas" id="O88811"/>
<dbReference type="ProteomicsDB" id="258656">
    <molecule id="O88811-1"/>
</dbReference>
<dbReference type="ProteomicsDB" id="258657">
    <molecule id="O88811-2"/>
</dbReference>
<dbReference type="Pumba" id="O88811"/>
<dbReference type="Antibodypedia" id="33682">
    <property type="antibodies" value="367 antibodies from 35 providers"/>
</dbReference>
<dbReference type="DNASU" id="56324"/>
<dbReference type="Ensembl" id="ENSMUST00000102759.8">
    <molecule id="O88811-1"/>
    <property type="protein sequence ID" value="ENSMUSP00000099820.2"/>
    <property type="gene ID" value="ENSMUSG00000055371.18"/>
</dbReference>
<dbReference type="Ensembl" id="ENSMUST00000127316.8">
    <molecule id="O88811-2"/>
    <property type="protein sequence ID" value="ENSMUSP00000121898.2"/>
    <property type="gene ID" value="ENSMUSG00000055371.18"/>
</dbReference>
<dbReference type="GeneID" id="56324"/>
<dbReference type="KEGG" id="mmu:56324"/>
<dbReference type="UCSC" id="uc008jre.1">
    <molecule id="O88811-1"/>
    <property type="organism name" value="mouse"/>
</dbReference>
<dbReference type="UCSC" id="uc008jrf.1">
    <molecule id="O88811-2"/>
    <property type="organism name" value="mouse"/>
</dbReference>
<dbReference type="AGR" id="MGI:1929100"/>
<dbReference type="CTD" id="10254"/>
<dbReference type="MGI" id="MGI:1929100">
    <property type="gene designation" value="Stam2"/>
</dbReference>
<dbReference type="VEuPathDB" id="HostDB:ENSMUSG00000055371"/>
<dbReference type="eggNOG" id="KOG2199">
    <property type="taxonomic scope" value="Eukaryota"/>
</dbReference>
<dbReference type="GeneTree" id="ENSGT00940000157055"/>
<dbReference type="HOGENOM" id="CLU_010104_0_2_1"/>
<dbReference type="InParanoid" id="O88811"/>
<dbReference type="OMA" id="CNTSEDW"/>
<dbReference type="OrthoDB" id="10068368at2759"/>
<dbReference type="PhylomeDB" id="O88811"/>
<dbReference type="TreeFam" id="TF315007"/>
<dbReference type="Reactome" id="R-MMU-182971">
    <property type="pathway name" value="EGFR downregulation"/>
</dbReference>
<dbReference type="Reactome" id="R-MMU-5689880">
    <property type="pathway name" value="Ub-specific processing proteases"/>
</dbReference>
<dbReference type="Reactome" id="R-MMU-6807004">
    <property type="pathway name" value="Negative regulation of MET activity"/>
</dbReference>
<dbReference type="Reactome" id="R-MMU-8856825">
    <property type="pathway name" value="Cargo recognition for clathrin-mediated endocytosis"/>
</dbReference>
<dbReference type="Reactome" id="R-MMU-8856828">
    <property type="pathway name" value="Clathrin-mediated endocytosis"/>
</dbReference>
<dbReference type="Reactome" id="R-MMU-9013420">
    <property type="pathway name" value="RHOU GTPase cycle"/>
</dbReference>
<dbReference type="Reactome" id="R-MMU-917729">
    <property type="pathway name" value="Endosomal Sorting Complex Required For Transport (ESCRT)"/>
</dbReference>
<dbReference type="BioGRID-ORCS" id="56324">
    <property type="hits" value="2 hits in 77 CRISPR screens"/>
</dbReference>
<dbReference type="ChiTaRS" id="Stam2">
    <property type="organism name" value="mouse"/>
</dbReference>
<dbReference type="EvolutionaryTrace" id="O88811"/>
<dbReference type="PRO" id="PR:O88811"/>
<dbReference type="Proteomes" id="UP000000589">
    <property type="component" value="Chromosome 2"/>
</dbReference>
<dbReference type="RNAct" id="O88811">
    <property type="molecule type" value="protein"/>
</dbReference>
<dbReference type="Bgee" id="ENSMUSG00000055371">
    <property type="expression patterns" value="Expressed in spermatid and 264 other cell types or tissues"/>
</dbReference>
<dbReference type="ExpressionAtlas" id="O88811">
    <property type="expression patterns" value="baseline and differential"/>
</dbReference>
<dbReference type="GO" id="GO:0005829">
    <property type="term" value="C:cytosol"/>
    <property type="evidence" value="ECO:0007669"/>
    <property type="project" value="Ensembl"/>
</dbReference>
<dbReference type="GO" id="GO:0031901">
    <property type="term" value="C:early endosome membrane"/>
    <property type="evidence" value="ECO:0007669"/>
    <property type="project" value="UniProtKB-SubCell"/>
</dbReference>
<dbReference type="GO" id="GO:0005654">
    <property type="term" value="C:nucleoplasm"/>
    <property type="evidence" value="ECO:0007669"/>
    <property type="project" value="Ensembl"/>
</dbReference>
<dbReference type="GO" id="GO:0035091">
    <property type="term" value="F:phosphatidylinositol binding"/>
    <property type="evidence" value="ECO:0007669"/>
    <property type="project" value="InterPro"/>
</dbReference>
<dbReference type="GO" id="GO:0043130">
    <property type="term" value="F:ubiquitin binding"/>
    <property type="evidence" value="ECO:0007669"/>
    <property type="project" value="InterPro"/>
</dbReference>
<dbReference type="GO" id="GO:0015031">
    <property type="term" value="P:protein transport"/>
    <property type="evidence" value="ECO:0007669"/>
    <property type="project" value="UniProtKB-KW"/>
</dbReference>
<dbReference type="CDD" id="cd21390">
    <property type="entry name" value="GAT_STAM2"/>
    <property type="match status" value="1"/>
</dbReference>
<dbReference type="CDD" id="cd11963">
    <property type="entry name" value="SH3_STAM2"/>
    <property type="match status" value="1"/>
</dbReference>
<dbReference type="CDD" id="cd16999">
    <property type="entry name" value="VHS_STAM2"/>
    <property type="match status" value="1"/>
</dbReference>
<dbReference type="FunFam" id="1.25.40.90:FF:000009">
    <property type="entry name" value="Putative signal transducing adapter molecule 1"/>
    <property type="match status" value="1"/>
</dbReference>
<dbReference type="FunFam" id="1.20.5.1940:FF:000002">
    <property type="entry name" value="Signal transducing adapter molecule 1"/>
    <property type="match status" value="1"/>
</dbReference>
<dbReference type="FunFam" id="2.30.30.40:FF:000086">
    <property type="entry name" value="signal transducing adapter molecule 2"/>
    <property type="match status" value="1"/>
</dbReference>
<dbReference type="Gene3D" id="1.20.5.1940">
    <property type="match status" value="1"/>
</dbReference>
<dbReference type="Gene3D" id="1.25.40.90">
    <property type="match status" value="1"/>
</dbReference>
<dbReference type="Gene3D" id="2.30.30.40">
    <property type="entry name" value="SH3 Domains"/>
    <property type="match status" value="1"/>
</dbReference>
<dbReference type="InterPro" id="IPR008942">
    <property type="entry name" value="ENTH_VHS"/>
</dbReference>
<dbReference type="InterPro" id="IPR036028">
    <property type="entry name" value="SH3-like_dom_sf"/>
</dbReference>
<dbReference type="InterPro" id="IPR001452">
    <property type="entry name" value="SH3_domain"/>
</dbReference>
<dbReference type="InterPro" id="IPR050670">
    <property type="entry name" value="STAM"/>
</dbReference>
<dbReference type="InterPro" id="IPR035675">
    <property type="entry name" value="STAM2_SH3"/>
</dbReference>
<dbReference type="InterPro" id="IPR003903">
    <property type="entry name" value="UIM_dom"/>
</dbReference>
<dbReference type="InterPro" id="IPR002014">
    <property type="entry name" value="VHS_dom"/>
</dbReference>
<dbReference type="InterPro" id="IPR047493">
    <property type="entry name" value="VHS_STAM2"/>
</dbReference>
<dbReference type="PANTHER" id="PTHR45929:SF1">
    <property type="entry name" value="HEMATOPOIETIC LINEAGE CELL-SPECIFIC PROTEIN-RELATED"/>
    <property type="match status" value="1"/>
</dbReference>
<dbReference type="PANTHER" id="PTHR45929">
    <property type="entry name" value="JAK PATHWAY SIGNAL TRANSDUCTION ADAPTOR MOLECULE"/>
    <property type="match status" value="1"/>
</dbReference>
<dbReference type="Pfam" id="PF00018">
    <property type="entry name" value="SH3_1"/>
    <property type="match status" value="1"/>
</dbReference>
<dbReference type="Pfam" id="PF02809">
    <property type="entry name" value="UIM"/>
    <property type="match status" value="1"/>
</dbReference>
<dbReference type="Pfam" id="PF00790">
    <property type="entry name" value="VHS"/>
    <property type="match status" value="1"/>
</dbReference>
<dbReference type="PRINTS" id="PR00499">
    <property type="entry name" value="P67PHOX"/>
</dbReference>
<dbReference type="PRINTS" id="PR00452">
    <property type="entry name" value="SH3DOMAIN"/>
</dbReference>
<dbReference type="SMART" id="SM00326">
    <property type="entry name" value="SH3"/>
    <property type="match status" value="1"/>
</dbReference>
<dbReference type="SMART" id="SM00726">
    <property type="entry name" value="UIM"/>
    <property type="match status" value="1"/>
</dbReference>
<dbReference type="SMART" id="SM00288">
    <property type="entry name" value="VHS"/>
    <property type="match status" value="1"/>
</dbReference>
<dbReference type="SUPFAM" id="SSF48464">
    <property type="entry name" value="ENTH/VHS domain"/>
    <property type="match status" value="1"/>
</dbReference>
<dbReference type="SUPFAM" id="SSF50044">
    <property type="entry name" value="SH3-domain"/>
    <property type="match status" value="1"/>
</dbReference>
<dbReference type="PROSITE" id="PS50002">
    <property type="entry name" value="SH3"/>
    <property type="match status" value="1"/>
</dbReference>
<dbReference type="PROSITE" id="PS50330">
    <property type="entry name" value="UIM"/>
    <property type="match status" value="1"/>
</dbReference>
<dbReference type="PROSITE" id="PS50179">
    <property type="entry name" value="VHS"/>
    <property type="match status" value="1"/>
</dbReference>
<protein>
    <recommendedName>
        <fullName>Signal transducing adapter molecule 2</fullName>
        <shortName>STAM-2</shortName>
    </recommendedName>
    <alternativeName>
        <fullName>Hrs-binding protein</fullName>
    </alternativeName>
</protein>
<name>STAM2_MOUSE</name>
<accession>O88811</accession>
<accession>A2AU00</accession>
<accession>Q8C8Y4</accession>
<evidence type="ECO:0000250" key="1"/>
<evidence type="ECO:0000250" key="2">
    <source>
        <dbReference type="UniProtKB" id="O75886"/>
    </source>
</evidence>
<evidence type="ECO:0000255" key="3">
    <source>
        <dbReference type="PROSITE-ProRule" id="PRU00192"/>
    </source>
</evidence>
<evidence type="ECO:0000255" key="4">
    <source>
        <dbReference type="PROSITE-ProRule" id="PRU00213"/>
    </source>
</evidence>
<evidence type="ECO:0000255" key="5">
    <source>
        <dbReference type="PROSITE-ProRule" id="PRU00218"/>
    </source>
</evidence>
<evidence type="ECO:0000269" key="6">
    <source>
    </source>
</evidence>
<evidence type="ECO:0000269" key="7">
    <source>
    </source>
</evidence>
<evidence type="ECO:0000269" key="8">
    <source>
    </source>
</evidence>
<evidence type="ECO:0000269" key="9">
    <source>
    </source>
</evidence>
<evidence type="ECO:0000269" key="10">
    <source>
    </source>
</evidence>
<evidence type="ECO:0000269" key="11">
    <source>
    </source>
</evidence>
<evidence type="ECO:0000303" key="12">
    <source>
    </source>
</evidence>
<evidence type="ECO:0000305" key="13"/>
<evidence type="ECO:0007829" key="14">
    <source>
        <dbReference type="PDB" id="1UJ0"/>
    </source>
</evidence>
<feature type="chain" id="PRO_0000190148" description="Signal transducing adapter molecule 2">
    <location>
        <begin position="1"/>
        <end position="523"/>
    </location>
</feature>
<feature type="domain" description="VHS" evidence="5">
    <location>
        <begin position="16"/>
        <end position="144"/>
    </location>
</feature>
<feature type="domain" description="UIM" evidence="4">
    <location>
        <begin position="165"/>
        <end position="184"/>
    </location>
</feature>
<feature type="domain" description="SH3" evidence="3">
    <location>
        <begin position="202"/>
        <end position="261"/>
    </location>
</feature>
<feature type="domain" description="ITAM">
    <location>
        <begin position="360"/>
        <end position="377"/>
    </location>
</feature>
<feature type="region of interest" description="Interaction with USP8" evidence="7">
    <location>
        <begin position="219"/>
        <end position="220"/>
    </location>
</feature>
<feature type="region of interest" description="Interaction with HGS">
    <location>
        <begin position="334"/>
        <end position="368"/>
    </location>
</feature>
<feature type="short sequence motif" description="PxVxL motif">
    <location>
        <begin position="54"/>
        <end position="67"/>
    </location>
</feature>
<feature type="splice variant" id="VSP_014849" description="In isoform 2." evidence="12">
    <location>
        <begin position="68"/>
        <end position="100"/>
    </location>
</feature>
<feature type="splice variant" id="VSP_014850" description="In isoform 2." evidence="12">
    <original>S</original>
    <variation>R</variation>
    <location>
        <position position="448"/>
    </location>
</feature>
<feature type="splice variant" id="VSP_014851" description="In isoform 2." evidence="12">
    <location>
        <begin position="449"/>
        <end position="523"/>
    </location>
</feature>
<feature type="mutagenesis site" description="Loss of interaction with UBQLN1; when associated with A-177." evidence="11">
    <original>L</original>
    <variation>A</variation>
    <location>
        <position position="176"/>
    </location>
</feature>
<feature type="mutagenesis site" description="Loss of interaction with UBQLN1; when associated with A-176." evidence="11">
    <original>S</original>
    <variation>A</variation>
    <location>
        <position position="177"/>
    </location>
</feature>
<feature type="strand" evidence="14">
    <location>
        <begin position="205"/>
        <end position="211"/>
    </location>
</feature>
<feature type="strand" evidence="14">
    <location>
        <begin position="228"/>
        <end position="233"/>
    </location>
</feature>
<feature type="strand" evidence="14">
    <location>
        <begin position="236"/>
        <end position="244"/>
    </location>
</feature>
<feature type="strand" evidence="14">
    <location>
        <begin position="247"/>
        <end position="252"/>
    </location>
</feature>
<feature type="helix" evidence="14">
    <location>
        <begin position="253"/>
        <end position="255"/>
    </location>
</feature>
<feature type="strand" evidence="14">
    <location>
        <begin position="256"/>
        <end position="258"/>
    </location>
</feature>